<reference key="1">
    <citation type="journal article" date="2016" name="Genome Announc.">
        <title>Complete genome sequence of Alkaliphilus metalliredigens strain QYMF, an alkaliphilic and metal-reducing bacterium isolated from borax-contaminated leachate ponds.</title>
        <authorList>
            <person name="Hwang C."/>
            <person name="Copeland A."/>
            <person name="Lucas S."/>
            <person name="Lapidus A."/>
            <person name="Barry K."/>
            <person name="Detter J.C."/>
            <person name="Glavina Del Rio T."/>
            <person name="Hammon N."/>
            <person name="Israni S."/>
            <person name="Dalin E."/>
            <person name="Tice H."/>
            <person name="Pitluck S."/>
            <person name="Chertkov O."/>
            <person name="Brettin T."/>
            <person name="Bruce D."/>
            <person name="Han C."/>
            <person name="Schmutz J."/>
            <person name="Larimer F."/>
            <person name="Land M.L."/>
            <person name="Hauser L."/>
            <person name="Kyrpides N."/>
            <person name="Mikhailova N."/>
            <person name="Ye Q."/>
            <person name="Zhou J."/>
            <person name="Richardson P."/>
            <person name="Fields M.W."/>
        </authorList>
    </citation>
    <scope>NUCLEOTIDE SEQUENCE [LARGE SCALE GENOMIC DNA]</scope>
    <source>
        <strain>QYMF</strain>
    </source>
</reference>
<name>RSMA_ALKMQ</name>
<organism>
    <name type="scientific">Alkaliphilus metalliredigens (strain QYMF)</name>
    <dbReference type="NCBI Taxonomy" id="293826"/>
    <lineage>
        <taxon>Bacteria</taxon>
        <taxon>Bacillati</taxon>
        <taxon>Bacillota</taxon>
        <taxon>Clostridia</taxon>
        <taxon>Peptostreptococcales</taxon>
        <taxon>Natronincolaceae</taxon>
        <taxon>Alkaliphilus</taxon>
    </lineage>
</organism>
<gene>
    <name evidence="1" type="primary">rsmA</name>
    <name evidence="1" type="synonym">ksgA</name>
    <name type="ordered locus">Amet_0138</name>
</gene>
<dbReference type="EC" id="2.1.1.182" evidence="1"/>
<dbReference type="EMBL" id="CP000724">
    <property type="protein sequence ID" value="ABR46377.1"/>
    <property type="molecule type" value="Genomic_DNA"/>
</dbReference>
<dbReference type="RefSeq" id="WP_011971286.1">
    <property type="nucleotide sequence ID" value="NC_009633.1"/>
</dbReference>
<dbReference type="SMR" id="A6TJK9"/>
<dbReference type="STRING" id="293826.Amet_0138"/>
<dbReference type="KEGG" id="amt:Amet_0138"/>
<dbReference type="eggNOG" id="COG0030">
    <property type="taxonomic scope" value="Bacteria"/>
</dbReference>
<dbReference type="HOGENOM" id="CLU_041220_0_0_9"/>
<dbReference type="OrthoDB" id="9814755at2"/>
<dbReference type="Proteomes" id="UP000001572">
    <property type="component" value="Chromosome"/>
</dbReference>
<dbReference type="GO" id="GO:0005829">
    <property type="term" value="C:cytosol"/>
    <property type="evidence" value="ECO:0007669"/>
    <property type="project" value="TreeGrafter"/>
</dbReference>
<dbReference type="GO" id="GO:0052908">
    <property type="term" value="F:16S rRNA (adenine(1518)-N(6)/adenine(1519)-N(6))-dimethyltransferase activity"/>
    <property type="evidence" value="ECO:0007669"/>
    <property type="project" value="UniProtKB-EC"/>
</dbReference>
<dbReference type="GO" id="GO:0003723">
    <property type="term" value="F:RNA binding"/>
    <property type="evidence" value="ECO:0007669"/>
    <property type="project" value="UniProtKB-KW"/>
</dbReference>
<dbReference type="CDD" id="cd02440">
    <property type="entry name" value="AdoMet_MTases"/>
    <property type="match status" value="1"/>
</dbReference>
<dbReference type="FunFam" id="3.40.50.150:FF:000023">
    <property type="entry name" value="Ribosomal RNA small subunit methyltransferase A"/>
    <property type="match status" value="1"/>
</dbReference>
<dbReference type="Gene3D" id="1.10.8.100">
    <property type="entry name" value="Ribosomal RNA adenine dimethylase-like, domain 2"/>
    <property type="match status" value="1"/>
</dbReference>
<dbReference type="Gene3D" id="3.40.50.150">
    <property type="entry name" value="Vaccinia Virus protein VP39"/>
    <property type="match status" value="1"/>
</dbReference>
<dbReference type="HAMAP" id="MF_00607">
    <property type="entry name" value="16SrRNA_methyltr_A"/>
    <property type="match status" value="1"/>
</dbReference>
<dbReference type="InterPro" id="IPR001737">
    <property type="entry name" value="KsgA/Erm"/>
</dbReference>
<dbReference type="InterPro" id="IPR023165">
    <property type="entry name" value="rRNA_Ade_diMease-like_C"/>
</dbReference>
<dbReference type="InterPro" id="IPR020596">
    <property type="entry name" value="rRNA_Ade_Mease_Trfase_CS"/>
</dbReference>
<dbReference type="InterPro" id="IPR020598">
    <property type="entry name" value="rRNA_Ade_methylase_Trfase_N"/>
</dbReference>
<dbReference type="InterPro" id="IPR011530">
    <property type="entry name" value="rRNA_adenine_dimethylase"/>
</dbReference>
<dbReference type="InterPro" id="IPR029063">
    <property type="entry name" value="SAM-dependent_MTases_sf"/>
</dbReference>
<dbReference type="NCBIfam" id="TIGR00755">
    <property type="entry name" value="ksgA"/>
    <property type="match status" value="1"/>
</dbReference>
<dbReference type="PANTHER" id="PTHR11727">
    <property type="entry name" value="DIMETHYLADENOSINE TRANSFERASE"/>
    <property type="match status" value="1"/>
</dbReference>
<dbReference type="PANTHER" id="PTHR11727:SF7">
    <property type="entry name" value="DIMETHYLADENOSINE TRANSFERASE-RELATED"/>
    <property type="match status" value="1"/>
</dbReference>
<dbReference type="Pfam" id="PF00398">
    <property type="entry name" value="RrnaAD"/>
    <property type="match status" value="1"/>
</dbReference>
<dbReference type="SMART" id="SM00650">
    <property type="entry name" value="rADc"/>
    <property type="match status" value="1"/>
</dbReference>
<dbReference type="SUPFAM" id="SSF53335">
    <property type="entry name" value="S-adenosyl-L-methionine-dependent methyltransferases"/>
    <property type="match status" value="1"/>
</dbReference>
<dbReference type="PROSITE" id="PS01131">
    <property type="entry name" value="RRNA_A_DIMETH"/>
    <property type="match status" value="1"/>
</dbReference>
<dbReference type="PROSITE" id="PS51689">
    <property type="entry name" value="SAM_RNA_A_N6_MT"/>
    <property type="match status" value="1"/>
</dbReference>
<comment type="function">
    <text evidence="1">Specifically dimethylates two adjacent adenosines (A1518 and A1519) in the loop of a conserved hairpin near the 3'-end of 16S rRNA in the 30S particle. May play a critical role in biogenesis of 30S subunits.</text>
</comment>
<comment type="catalytic activity">
    <reaction evidence="1">
        <text>adenosine(1518)/adenosine(1519) in 16S rRNA + 4 S-adenosyl-L-methionine = N(6)-dimethyladenosine(1518)/N(6)-dimethyladenosine(1519) in 16S rRNA + 4 S-adenosyl-L-homocysteine + 4 H(+)</text>
        <dbReference type="Rhea" id="RHEA:19609"/>
        <dbReference type="Rhea" id="RHEA-COMP:10232"/>
        <dbReference type="Rhea" id="RHEA-COMP:10233"/>
        <dbReference type="ChEBI" id="CHEBI:15378"/>
        <dbReference type="ChEBI" id="CHEBI:57856"/>
        <dbReference type="ChEBI" id="CHEBI:59789"/>
        <dbReference type="ChEBI" id="CHEBI:74411"/>
        <dbReference type="ChEBI" id="CHEBI:74493"/>
        <dbReference type="EC" id="2.1.1.182"/>
    </reaction>
</comment>
<comment type="subcellular location">
    <subcellularLocation>
        <location evidence="1">Cytoplasm</location>
    </subcellularLocation>
</comment>
<comment type="similarity">
    <text evidence="1">Belongs to the class I-like SAM-binding methyltransferase superfamily. rRNA adenine N(6)-methyltransferase family. RsmA subfamily.</text>
</comment>
<sequence length="287" mass="32212">MDKIVSPSKTKAIVEKYKFRFSKSLGQNFLIDQNILEDIVDGADIQPDDCVIEIGPGIGTLTQFIAEKAHKVVAIEIDRNLIPILKHTLADYQNVEVINQDVLKVDLHQLIADKFEGKPVKVIANLPYYVTTPIVMRFLEEKVPVDSLVIMIQKEVAVRMQAGPGTKDYGALSIAVQYYCNPEILLKVPPSVFIPQPKVESIVIKLQVYPEPKVKVERDDLMFALVKDAFGKRRKTLLNALSSGLLQLSKEIVRESLEAANIDENRRGETLTIEEYATLTKEVAARQ</sequence>
<feature type="chain" id="PRO_1000061277" description="Ribosomal RNA small subunit methyltransferase A">
    <location>
        <begin position="1"/>
        <end position="287"/>
    </location>
</feature>
<feature type="binding site" evidence="1">
    <location>
        <position position="28"/>
    </location>
    <ligand>
        <name>S-adenosyl-L-methionine</name>
        <dbReference type="ChEBI" id="CHEBI:59789"/>
    </ligand>
</feature>
<feature type="binding site" evidence="1">
    <location>
        <position position="30"/>
    </location>
    <ligand>
        <name>S-adenosyl-L-methionine</name>
        <dbReference type="ChEBI" id="CHEBI:59789"/>
    </ligand>
</feature>
<feature type="binding site" evidence="1">
    <location>
        <position position="55"/>
    </location>
    <ligand>
        <name>S-adenosyl-L-methionine</name>
        <dbReference type="ChEBI" id="CHEBI:59789"/>
    </ligand>
</feature>
<feature type="binding site" evidence="1">
    <location>
        <position position="76"/>
    </location>
    <ligand>
        <name>S-adenosyl-L-methionine</name>
        <dbReference type="ChEBI" id="CHEBI:59789"/>
    </ligand>
</feature>
<feature type="binding site" evidence="1">
    <location>
        <position position="101"/>
    </location>
    <ligand>
        <name>S-adenosyl-L-methionine</name>
        <dbReference type="ChEBI" id="CHEBI:59789"/>
    </ligand>
</feature>
<feature type="binding site" evidence="1">
    <location>
        <position position="125"/>
    </location>
    <ligand>
        <name>S-adenosyl-L-methionine</name>
        <dbReference type="ChEBI" id="CHEBI:59789"/>
    </ligand>
</feature>
<proteinExistence type="inferred from homology"/>
<evidence type="ECO:0000255" key="1">
    <source>
        <dbReference type="HAMAP-Rule" id="MF_00607"/>
    </source>
</evidence>
<accession>A6TJK9</accession>
<keyword id="KW-0963">Cytoplasm</keyword>
<keyword id="KW-0489">Methyltransferase</keyword>
<keyword id="KW-1185">Reference proteome</keyword>
<keyword id="KW-0694">RNA-binding</keyword>
<keyword id="KW-0698">rRNA processing</keyword>
<keyword id="KW-0949">S-adenosyl-L-methionine</keyword>
<keyword id="KW-0808">Transferase</keyword>
<protein>
    <recommendedName>
        <fullName evidence="1">Ribosomal RNA small subunit methyltransferase A</fullName>
        <ecNumber evidence="1">2.1.1.182</ecNumber>
    </recommendedName>
    <alternativeName>
        <fullName evidence="1">16S rRNA (adenine(1518)-N(6)/adenine(1519)-N(6))-dimethyltransferase</fullName>
    </alternativeName>
    <alternativeName>
        <fullName evidence="1">16S rRNA dimethyladenosine transferase</fullName>
    </alternativeName>
    <alternativeName>
        <fullName evidence="1">16S rRNA dimethylase</fullName>
    </alternativeName>
    <alternativeName>
        <fullName evidence="1">S-adenosylmethionine-6-N', N'-adenosyl(rRNA) dimethyltransferase</fullName>
    </alternativeName>
</protein>